<proteinExistence type="inferred from homology"/>
<accession>P59688</accession>
<protein>
    <recommendedName>
        <fullName evidence="1">Glucosamine-6-phosphate deaminase</fullName>
        <ecNumber evidence="1">3.5.99.6</ecNumber>
    </recommendedName>
    <alternativeName>
        <fullName evidence="1">GlcN6P deaminase</fullName>
        <shortName evidence="1">GNPDA</shortName>
    </alternativeName>
    <alternativeName>
        <fullName evidence="1">Glucosamine-6-phosphate isomerase</fullName>
    </alternativeName>
</protein>
<sequence>MRLIPLTTAEQVGKWAARHIVNRINAFKPTADRPFVLGLPTGGTPMTTYKALVEMHKAGQVSFKHVVTFNMDEYVGLPKEHPESYYSFMHRNFFDHVDIPAENINLLNGNAPDIDAECRQYEEKIRSYGKIHLFMGGVGNDGHIAFNEPASSLASRTRIKTLTHDTRVANSRFFDNDVNQVPKYALTVGVGTLLDAEEVMIMVLGSQKALALQAAVEGCVNHMWTISCLQLHPKAIMVCDEPSTMELKVKTLRYFNELEAENIKGL</sequence>
<dbReference type="EC" id="3.5.99.6" evidence="1"/>
<dbReference type="EMBL" id="AE005674">
    <property type="protein sequence ID" value="AAN42253.1"/>
    <property type="molecule type" value="Genomic_DNA"/>
</dbReference>
<dbReference type="EMBL" id="AE014073">
    <property type="protein sequence ID" value="AAP16124.1"/>
    <property type="molecule type" value="Genomic_DNA"/>
</dbReference>
<dbReference type="RefSeq" id="NP_706546.1">
    <property type="nucleotide sequence ID" value="NC_004337.2"/>
</dbReference>
<dbReference type="RefSeq" id="WP_001237076.1">
    <property type="nucleotide sequence ID" value="NZ_WPGW01000002.1"/>
</dbReference>
<dbReference type="SMR" id="P59688"/>
<dbReference type="STRING" id="198214.SF0615"/>
<dbReference type="PaxDb" id="198214-SF0615"/>
<dbReference type="GeneID" id="1023570"/>
<dbReference type="KEGG" id="sfl:SF0615"/>
<dbReference type="KEGG" id="sfx:S0626"/>
<dbReference type="PATRIC" id="fig|198214.7.peg.718"/>
<dbReference type="HOGENOM" id="CLU_049611_0_1_6"/>
<dbReference type="UniPathway" id="UPA00629">
    <property type="reaction ID" value="UER00684"/>
</dbReference>
<dbReference type="Proteomes" id="UP000001006">
    <property type="component" value="Chromosome"/>
</dbReference>
<dbReference type="Proteomes" id="UP000002673">
    <property type="component" value="Chromosome"/>
</dbReference>
<dbReference type="GO" id="GO:0005829">
    <property type="term" value="C:cytosol"/>
    <property type="evidence" value="ECO:0007669"/>
    <property type="project" value="TreeGrafter"/>
</dbReference>
<dbReference type="GO" id="GO:0004342">
    <property type="term" value="F:glucosamine-6-phosphate deaminase activity"/>
    <property type="evidence" value="ECO:0007669"/>
    <property type="project" value="UniProtKB-UniRule"/>
</dbReference>
<dbReference type="GO" id="GO:0042802">
    <property type="term" value="F:identical protein binding"/>
    <property type="evidence" value="ECO:0007669"/>
    <property type="project" value="TreeGrafter"/>
</dbReference>
<dbReference type="GO" id="GO:0005975">
    <property type="term" value="P:carbohydrate metabolic process"/>
    <property type="evidence" value="ECO:0007669"/>
    <property type="project" value="InterPro"/>
</dbReference>
<dbReference type="GO" id="GO:0006043">
    <property type="term" value="P:glucosamine catabolic process"/>
    <property type="evidence" value="ECO:0007669"/>
    <property type="project" value="TreeGrafter"/>
</dbReference>
<dbReference type="GO" id="GO:0006046">
    <property type="term" value="P:N-acetylglucosamine catabolic process"/>
    <property type="evidence" value="ECO:0007669"/>
    <property type="project" value="TreeGrafter"/>
</dbReference>
<dbReference type="GO" id="GO:0019262">
    <property type="term" value="P:N-acetylneuraminate catabolic process"/>
    <property type="evidence" value="ECO:0007669"/>
    <property type="project" value="UniProtKB-UniRule"/>
</dbReference>
<dbReference type="CDD" id="cd01399">
    <property type="entry name" value="GlcN6P_deaminase"/>
    <property type="match status" value="1"/>
</dbReference>
<dbReference type="FunFam" id="3.40.50.1360:FF:000002">
    <property type="entry name" value="Glucosamine-6-phosphate deaminase"/>
    <property type="match status" value="1"/>
</dbReference>
<dbReference type="Gene3D" id="3.40.50.1360">
    <property type="match status" value="1"/>
</dbReference>
<dbReference type="HAMAP" id="MF_01241">
    <property type="entry name" value="GlcN6P_deamin"/>
    <property type="match status" value="1"/>
</dbReference>
<dbReference type="InterPro" id="IPR006148">
    <property type="entry name" value="Glc/Gal-6P_isomerase"/>
</dbReference>
<dbReference type="InterPro" id="IPR004547">
    <property type="entry name" value="Glucosamine6P_isomerase"/>
</dbReference>
<dbReference type="InterPro" id="IPR018321">
    <property type="entry name" value="Glucosamine6P_isomerase_CS"/>
</dbReference>
<dbReference type="InterPro" id="IPR037171">
    <property type="entry name" value="NagB/RpiA_transferase-like"/>
</dbReference>
<dbReference type="NCBIfam" id="TIGR00502">
    <property type="entry name" value="nagB"/>
    <property type="match status" value="1"/>
</dbReference>
<dbReference type="NCBIfam" id="NF001685">
    <property type="entry name" value="PRK00443.1-5"/>
    <property type="match status" value="1"/>
</dbReference>
<dbReference type="PANTHER" id="PTHR11280">
    <property type="entry name" value="GLUCOSAMINE-6-PHOSPHATE ISOMERASE"/>
    <property type="match status" value="1"/>
</dbReference>
<dbReference type="PANTHER" id="PTHR11280:SF5">
    <property type="entry name" value="GLUCOSAMINE-6-PHOSPHATE ISOMERASE"/>
    <property type="match status" value="1"/>
</dbReference>
<dbReference type="Pfam" id="PF01182">
    <property type="entry name" value="Glucosamine_iso"/>
    <property type="match status" value="1"/>
</dbReference>
<dbReference type="SUPFAM" id="SSF100950">
    <property type="entry name" value="NagB/RpiA/CoA transferase-like"/>
    <property type="match status" value="1"/>
</dbReference>
<dbReference type="PROSITE" id="PS01161">
    <property type="entry name" value="GLC_GALNAC_ISOMERASE"/>
    <property type="match status" value="1"/>
</dbReference>
<gene>
    <name evidence="1" type="primary">nagB</name>
    <name type="ordered locus">SF0615</name>
    <name type="ordered locus">S0626</name>
</gene>
<organism>
    <name type="scientific">Shigella flexneri</name>
    <dbReference type="NCBI Taxonomy" id="623"/>
    <lineage>
        <taxon>Bacteria</taxon>
        <taxon>Pseudomonadati</taxon>
        <taxon>Pseudomonadota</taxon>
        <taxon>Gammaproteobacteria</taxon>
        <taxon>Enterobacterales</taxon>
        <taxon>Enterobacteriaceae</taxon>
        <taxon>Shigella</taxon>
    </lineage>
</organism>
<feature type="chain" id="PRO_0000160161" description="Glucosamine-6-phosphate deaminase">
    <location>
        <begin position="1"/>
        <end position="266"/>
    </location>
</feature>
<feature type="active site" description="Proton acceptor; for enolization step" evidence="1">
    <location>
        <position position="72"/>
    </location>
</feature>
<feature type="active site" description="For ring-opening step" evidence="1">
    <location>
        <position position="141"/>
    </location>
</feature>
<feature type="active site" description="Proton acceptor; for ring-opening step" evidence="1">
    <location>
        <position position="143"/>
    </location>
</feature>
<feature type="active site" description="For ring-opening step" evidence="1">
    <location>
        <position position="148"/>
    </location>
</feature>
<feature type="site" description="Part of the allosteric site" evidence="1">
    <location>
        <position position="151"/>
    </location>
</feature>
<feature type="site" description="Part of the allosteric site" evidence="1">
    <location>
        <position position="158"/>
    </location>
</feature>
<feature type="site" description="Part of the allosteric site" evidence="1">
    <location>
        <position position="160"/>
    </location>
</feature>
<feature type="site" description="Part of the allosteric site" evidence="1">
    <location>
        <position position="161"/>
    </location>
</feature>
<feature type="site" description="Part of the allosteric site" evidence="1">
    <location>
        <position position="254"/>
    </location>
</feature>
<feature type="disulfide bond" description="Interchain" evidence="1">
    <location>
        <position position="219"/>
    </location>
</feature>
<feature type="sequence conflict" description="In Ref. 2; AAP16124." evidence="2" ref="2">
    <original>AV</original>
    <variation>GG</variation>
    <location>
        <begin position="215"/>
        <end position="216"/>
    </location>
</feature>
<evidence type="ECO:0000255" key="1">
    <source>
        <dbReference type="HAMAP-Rule" id="MF_01241"/>
    </source>
</evidence>
<evidence type="ECO:0000305" key="2"/>
<reference key="1">
    <citation type="journal article" date="2002" name="Nucleic Acids Res.">
        <title>Genome sequence of Shigella flexneri 2a: insights into pathogenicity through comparison with genomes of Escherichia coli K12 and O157.</title>
        <authorList>
            <person name="Jin Q."/>
            <person name="Yuan Z."/>
            <person name="Xu J."/>
            <person name="Wang Y."/>
            <person name="Shen Y."/>
            <person name="Lu W."/>
            <person name="Wang J."/>
            <person name="Liu H."/>
            <person name="Yang J."/>
            <person name="Yang F."/>
            <person name="Zhang X."/>
            <person name="Zhang J."/>
            <person name="Yang G."/>
            <person name="Wu H."/>
            <person name="Qu D."/>
            <person name="Dong J."/>
            <person name="Sun L."/>
            <person name="Xue Y."/>
            <person name="Zhao A."/>
            <person name="Gao Y."/>
            <person name="Zhu J."/>
            <person name="Kan B."/>
            <person name="Ding K."/>
            <person name="Chen S."/>
            <person name="Cheng H."/>
            <person name="Yao Z."/>
            <person name="He B."/>
            <person name="Chen R."/>
            <person name="Ma D."/>
            <person name="Qiang B."/>
            <person name="Wen Y."/>
            <person name="Hou Y."/>
            <person name="Yu J."/>
        </authorList>
    </citation>
    <scope>NUCLEOTIDE SEQUENCE [LARGE SCALE GENOMIC DNA]</scope>
    <source>
        <strain>301 / Serotype 2a</strain>
    </source>
</reference>
<reference key="2">
    <citation type="journal article" date="2003" name="Infect. Immun.">
        <title>Complete genome sequence and comparative genomics of Shigella flexneri serotype 2a strain 2457T.</title>
        <authorList>
            <person name="Wei J."/>
            <person name="Goldberg M.B."/>
            <person name="Burland V."/>
            <person name="Venkatesan M.M."/>
            <person name="Deng W."/>
            <person name="Fournier G."/>
            <person name="Mayhew G.F."/>
            <person name="Plunkett G. III"/>
            <person name="Rose D.J."/>
            <person name="Darling A."/>
            <person name="Mau B."/>
            <person name="Perna N.T."/>
            <person name="Payne S.M."/>
            <person name="Runyen-Janecky L.J."/>
            <person name="Zhou S."/>
            <person name="Schwartz D.C."/>
            <person name="Blattner F.R."/>
        </authorList>
    </citation>
    <scope>NUCLEOTIDE SEQUENCE [LARGE SCALE GENOMIC DNA]</scope>
    <source>
        <strain>ATCC 700930 / 2457T / Serotype 2a</strain>
    </source>
</reference>
<keyword id="KW-0021">Allosteric enzyme</keyword>
<keyword id="KW-0119">Carbohydrate metabolism</keyword>
<keyword id="KW-1015">Disulfide bond</keyword>
<keyword id="KW-0378">Hydrolase</keyword>
<keyword id="KW-1185">Reference proteome</keyword>
<comment type="function">
    <text evidence="1">Catalyzes the reversible isomerization-deamination of glucosamine 6-phosphate (GlcN6P) to form fructose 6-phosphate (Fru6P) and ammonium ion.</text>
</comment>
<comment type="catalytic activity">
    <reaction evidence="1">
        <text>alpha-D-glucosamine 6-phosphate + H2O = beta-D-fructose 6-phosphate + NH4(+)</text>
        <dbReference type="Rhea" id="RHEA:12172"/>
        <dbReference type="ChEBI" id="CHEBI:15377"/>
        <dbReference type="ChEBI" id="CHEBI:28938"/>
        <dbReference type="ChEBI" id="CHEBI:57634"/>
        <dbReference type="ChEBI" id="CHEBI:75989"/>
        <dbReference type="EC" id="3.5.99.6"/>
    </reaction>
</comment>
<comment type="activity regulation">
    <text evidence="1">Allosterically activated by N-acetylglucosamine 6-phosphate (GlcNAc6P).</text>
</comment>
<comment type="pathway">
    <text evidence="1">Amino-sugar metabolism; N-acetylneuraminate degradation; D-fructose 6-phosphate from N-acetylneuraminate: step 5/5.</text>
</comment>
<comment type="subunit">
    <text evidence="1">Homohexamer; trimer of disulfide-linked dimers.</text>
</comment>
<comment type="similarity">
    <text evidence="1">Belongs to the glucosamine/galactosamine-6-phosphate isomerase family. NagB subfamily.</text>
</comment>
<name>NAGB_SHIFL</name>